<organism>
    <name type="scientific">Stachybotrys chlorohalonatus (strain IBT 40285)</name>
    <dbReference type="NCBI Taxonomy" id="1283841"/>
    <lineage>
        <taxon>Eukaryota</taxon>
        <taxon>Fungi</taxon>
        <taxon>Dikarya</taxon>
        <taxon>Ascomycota</taxon>
        <taxon>Pezizomycotina</taxon>
        <taxon>Sordariomycetes</taxon>
        <taxon>Hypocreomycetidae</taxon>
        <taxon>Hypocreales</taxon>
        <taxon>Stachybotryaceae</taxon>
        <taxon>Stachybotrys</taxon>
    </lineage>
</organism>
<dbReference type="EMBL" id="KL659308">
    <property type="protein sequence ID" value="KFA70117.1"/>
    <property type="molecule type" value="Genomic_DNA"/>
</dbReference>
<dbReference type="HOGENOM" id="CLU_1300163_0_0_1"/>
<dbReference type="InParanoid" id="A0A084R1N2"/>
<dbReference type="OrthoDB" id="2851338at2759"/>
<dbReference type="Proteomes" id="UP000028524">
    <property type="component" value="Unassembled WGS sequence"/>
</dbReference>
<gene>
    <name evidence="2" type="primary">ATR1</name>
    <name type="ORF">S40285_10095</name>
</gene>
<proteinExistence type="inferred from homology"/>
<protein>
    <recommendedName>
        <fullName evidence="2">Core atranone cluster (CAC) protein 1</fullName>
    </recommendedName>
</protein>
<keyword id="KW-1185">Reference proteome</keyword>
<comment type="function">
    <text evidence="1 3">Part of the core atranone cluster (CAC) which products are predicted to catalyze most or all steps of mycotoxin atranone synthesis, starting from geranylgeranyl pyrophosphate (GGPP) (PubMed:25015739). The initial cyclization of GGPP to dolabellane is probably performed by the terpene cyclase ATR13 (PubMed:25015739). The Baeyer-Villiger oxidation near the end of the atranone synthesis, which converts atranones D and E to atranones F and G is predicted to be catalyzed by the monooxygenase ATR8 (PubMed:25015739). Of the CAC's other predicted gene products, the reducing PKS ATR6 might synthesize a polyketide chain (PubMed:25015739). This polyketide is probably transferred onto the atranone backbone by the polyketide transferase ATR5 (By similarity). Other predicted CAC products include 4 oxygenases (ATR2, ATR3, ATR4, and ATR14), 3 short-chain reductases (ATR7, ATR9, and ATR10), and a methyltransferase (ATR12) (PubMed:25015739). These may all be involved in the various steps of atranone biosynthesis, although their specific roles must await experimental determination (PubMed:25015739).</text>
</comment>
<comment type="pathway">
    <text evidence="3">Mycotoxin biosynthesis.</text>
</comment>
<reference key="1">
    <citation type="journal article" date="2014" name="BMC Genomics">
        <title>Comparative genome sequencing reveals chemotype-specific gene clusters in the toxigenic black mold Stachybotrys.</title>
        <authorList>
            <person name="Semeiks J."/>
            <person name="Borek D."/>
            <person name="Otwinowski Z."/>
            <person name="Grishin N.V."/>
        </authorList>
    </citation>
    <scope>NUCLEOTIDE SEQUENCE [LARGE SCALE GENOMIC DNA]</scope>
    <scope>IDENTIFICATION</scope>
    <scope>FUNCTION</scope>
    <source>
        <strain>IBT 40285</strain>
    </source>
</reference>
<sequence>MASIPGLLFSLTKPMDPTIPEAQFNDWYTNKHLVDTVNSGLASLAVRFKNVNPSHQWPYLALYRLQDLAKLYNMEFMSSLPTDSPAGWGVPNSKADIRIEPRGYQLLTTLERENAKTGVPKFVLTVEFRESFMNAEAFVASCQGLQLDDVGKQPGYRRSMLYQAGRSLVTQEGKAGTEFRSAEQQQPSYLVVHEFDQMPTNTFQEQGASGLWEYMAEYGTGLYRTEPVPVKVYN</sequence>
<accession>A0A084R1N2</accession>
<evidence type="ECO:0000250" key="1">
    <source>
        <dbReference type="UniProtKB" id="Q4WAY4"/>
    </source>
</evidence>
<evidence type="ECO:0000303" key="2">
    <source>
    </source>
</evidence>
<evidence type="ECO:0000305" key="3">
    <source>
    </source>
</evidence>
<name>ATR1_STAC4</name>
<feature type="chain" id="PRO_0000442388" description="Core atranone cluster (CAC) protein 1">
    <location>
        <begin position="1"/>
        <end position="234"/>
    </location>
</feature>